<keyword id="KW-0687">Ribonucleoprotein</keyword>
<keyword id="KW-0689">Ribosomal protein</keyword>
<keyword id="KW-0694">RNA-binding</keyword>
<keyword id="KW-0699">rRNA-binding</keyword>
<organism>
    <name type="scientific">Yersinia pestis bv. Antiqua (strain Antiqua)</name>
    <dbReference type="NCBI Taxonomy" id="360102"/>
    <lineage>
        <taxon>Bacteria</taxon>
        <taxon>Pseudomonadati</taxon>
        <taxon>Pseudomonadota</taxon>
        <taxon>Gammaproteobacteria</taxon>
        <taxon>Enterobacterales</taxon>
        <taxon>Yersiniaceae</taxon>
        <taxon>Yersinia</taxon>
    </lineage>
</organism>
<gene>
    <name evidence="1" type="primary">rpsK</name>
    <name type="ordered locus">YPA_3241</name>
</gene>
<protein>
    <recommendedName>
        <fullName evidence="1">Small ribosomal subunit protein uS11</fullName>
    </recommendedName>
    <alternativeName>
        <fullName evidence="2">30S ribosomal protein S11</fullName>
    </alternativeName>
</protein>
<proteinExistence type="inferred from homology"/>
<accession>Q1C2W9</accession>
<sequence>MAKAPIRARKRVRKTVSDGVAHIHASFNNTIVTITDRQGNALGWATAGGSGFRGSRKSTPFAAQVAAERCAEAVKEYGIKNLEVMVKGPGPGRESTIRALNAAGFRITNITDVTPIPHNGCRPPKKRRV</sequence>
<reference key="1">
    <citation type="journal article" date="2006" name="J. Bacteriol.">
        <title>Complete genome sequence of Yersinia pestis strains Antiqua and Nepal516: evidence of gene reduction in an emerging pathogen.</title>
        <authorList>
            <person name="Chain P.S.G."/>
            <person name="Hu P."/>
            <person name="Malfatti S.A."/>
            <person name="Radnedge L."/>
            <person name="Larimer F."/>
            <person name="Vergez L.M."/>
            <person name="Worsham P."/>
            <person name="Chu M.C."/>
            <person name="Andersen G.L."/>
        </authorList>
    </citation>
    <scope>NUCLEOTIDE SEQUENCE [LARGE SCALE GENOMIC DNA]</scope>
    <source>
        <strain>Antiqua</strain>
    </source>
</reference>
<dbReference type="EMBL" id="CP000308">
    <property type="protein sequence ID" value="ABG15203.1"/>
    <property type="molecule type" value="Genomic_DNA"/>
</dbReference>
<dbReference type="RefSeq" id="WP_002218948.1">
    <property type="nucleotide sequence ID" value="NZ_CP009906.1"/>
</dbReference>
<dbReference type="SMR" id="Q1C2W9"/>
<dbReference type="GeneID" id="96663173"/>
<dbReference type="KEGG" id="ypa:YPA_3241"/>
<dbReference type="Proteomes" id="UP000001971">
    <property type="component" value="Chromosome"/>
</dbReference>
<dbReference type="GO" id="GO:1990904">
    <property type="term" value="C:ribonucleoprotein complex"/>
    <property type="evidence" value="ECO:0007669"/>
    <property type="project" value="UniProtKB-KW"/>
</dbReference>
<dbReference type="GO" id="GO:0005840">
    <property type="term" value="C:ribosome"/>
    <property type="evidence" value="ECO:0007669"/>
    <property type="project" value="UniProtKB-KW"/>
</dbReference>
<dbReference type="GO" id="GO:0019843">
    <property type="term" value="F:rRNA binding"/>
    <property type="evidence" value="ECO:0007669"/>
    <property type="project" value="UniProtKB-UniRule"/>
</dbReference>
<dbReference type="GO" id="GO:0003735">
    <property type="term" value="F:structural constituent of ribosome"/>
    <property type="evidence" value="ECO:0007669"/>
    <property type="project" value="InterPro"/>
</dbReference>
<dbReference type="GO" id="GO:0006412">
    <property type="term" value="P:translation"/>
    <property type="evidence" value="ECO:0007669"/>
    <property type="project" value="UniProtKB-UniRule"/>
</dbReference>
<dbReference type="FunFam" id="3.30.420.80:FF:000001">
    <property type="entry name" value="30S ribosomal protein S11"/>
    <property type="match status" value="1"/>
</dbReference>
<dbReference type="Gene3D" id="3.30.420.80">
    <property type="entry name" value="Ribosomal protein S11"/>
    <property type="match status" value="1"/>
</dbReference>
<dbReference type="HAMAP" id="MF_01310">
    <property type="entry name" value="Ribosomal_uS11"/>
    <property type="match status" value="1"/>
</dbReference>
<dbReference type="InterPro" id="IPR001971">
    <property type="entry name" value="Ribosomal_uS11"/>
</dbReference>
<dbReference type="InterPro" id="IPR019981">
    <property type="entry name" value="Ribosomal_uS11_bac-type"/>
</dbReference>
<dbReference type="InterPro" id="IPR018102">
    <property type="entry name" value="Ribosomal_uS11_CS"/>
</dbReference>
<dbReference type="InterPro" id="IPR036967">
    <property type="entry name" value="Ribosomal_uS11_sf"/>
</dbReference>
<dbReference type="NCBIfam" id="NF003698">
    <property type="entry name" value="PRK05309.1"/>
    <property type="match status" value="1"/>
</dbReference>
<dbReference type="NCBIfam" id="TIGR03632">
    <property type="entry name" value="uS11_bact"/>
    <property type="match status" value="1"/>
</dbReference>
<dbReference type="PANTHER" id="PTHR11759">
    <property type="entry name" value="40S RIBOSOMAL PROTEIN S14/30S RIBOSOMAL PROTEIN S11"/>
    <property type="match status" value="1"/>
</dbReference>
<dbReference type="Pfam" id="PF00411">
    <property type="entry name" value="Ribosomal_S11"/>
    <property type="match status" value="1"/>
</dbReference>
<dbReference type="PIRSF" id="PIRSF002131">
    <property type="entry name" value="Ribosomal_S11"/>
    <property type="match status" value="1"/>
</dbReference>
<dbReference type="SUPFAM" id="SSF53137">
    <property type="entry name" value="Translational machinery components"/>
    <property type="match status" value="1"/>
</dbReference>
<dbReference type="PROSITE" id="PS00054">
    <property type="entry name" value="RIBOSOMAL_S11"/>
    <property type="match status" value="1"/>
</dbReference>
<evidence type="ECO:0000255" key="1">
    <source>
        <dbReference type="HAMAP-Rule" id="MF_01310"/>
    </source>
</evidence>
<evidence type="ECO:0000305" key="2"/>
<comment type="function">
    <text evidence="1">Located on the platform of the 30S subunit, it bridges several disparate RNA helices of the 16S rRNA. Forms part of the Shine-Dalgarno cleft in the 70S ribosome.</text>
</comment>
<comment type="subunit">
    <text evidence="1">Part of the 30S ribosomal subunit. Interacts with proteins S7 and S18. Binds to IF-3.</text>
</comment>
<comment type="similarity">
    <text evidence="1">Belongs to the universal ribosomal protein uS11 family.</text>
</comment>
<name>RS11_YERPA</name>
<feature type="chain" id="PRO_0000294889" description="Small ribosomal subunit protein uS11">
    <location>
        <begin position="1"/>
        <end position="129"/>
    </location>
</feature>